<reference key="1">
    <citation type="journal article" date="2005" name="J. Infect. Dis.">
        <title>Genome sequence of a serotype M28 strain of group A Streptococcus: potential new insights into puerperal sepsis and bacterial disease specificity.</title>
        <authorList>
            <person name="Green N.M."/>
            <person name="Zhang S."/>
            <person name="Porcella S.F."/>
            <person name="Nagiec M.J."/>
            <person name="Barbian K.D."/>
            <person name="Beres S.B."/>
            <person name="Lefebvre R.B."/>
            <person name="Musser J.M."/>
        </authorList>
    </citation>
    <scope>NUCLEOTIDE SEQUENCE [LARGE SCALE GENOMIC DNA]</scope>
    <source>
        <strain>MGAS6180</strain>
    </source>
</reference>
<name>SYL_STRPM</name>
<keyword id="KW-0030">Aminoacyl-tRNA synthetase</keyword>
<keyword id="KW-0067">ATP-binding</keyword>
<keyword id="KW-0963">Cytoplasm</keyword>
<keyword id="KW-0436">Ligase</keyword>
<keyword id="KW-0547">Nucleotide-binding</keyword>
<keyword id="KW-0648">Protein biosynthesis</keyword>
<evidence type="ECO:0000255" key="1">
    <source>
        <dbReference type="HAMAP-Rule" id="MF_00049"/>
    </source>
</evidence>
<comment type="catalytic activity">
    <reaction evidence="1">
        <text>tRNA(Leu) + L-leucine + ATP = L-leucyl-tRNA(Leu) + AMP + diphosphate</text>
        <dbReference type="Rhea" id="RHEA:11688"/>
        <dbReference type="Rhea" id="RHEA-COMP:9613"/>
        <dbReference type="Rhea" id="RHEA-COMP:9622"/>
        <dbReference type="ChEBI" id="CHEBI:30616"/>
        <dbReference type="ChEBI" id="CHEBI:33019"/>
        <dbReference type="ChEBI" id="CHEBI:57427"/>
        <dbReference type="ChEBI" id="CHEBI:78442"/>
        <dbReference type="ChEBI" id="CHEBI:78494"/>
        <dbReference type="ChEBI" id="CHEBI:456215"/>
        <dbReference type="EC" id="6.1.1.4"/>
    </reaction>
</comment>
<comment type="subcellular location">
    <subcellularLocation>
        <location evidence="1">Cytoplasm</location>
    </subcellularLocation>
</comment>
<comment type="similarity">
    <text evidence="1">Belongs to the class-I aminoacyl-tRNA synthetase family.</text>
</comment>
<organism>
    <name type="scientific">Streptococcus pyogenes serotype M28 (strain MGAS6180)</name>
    <dbReference type="NCBI Taxonomy" id="319701"/>
    <lineage>
        <taxon>Bacteria</taxon>
        <taxon>Bacillati</taxon>
        <taxon>Bacillota</taxon>
        <taxon>Bacilli</taxon>
        <taxon>Lactobacillales</taxon>
        <taxon>Streptococcaceae</taxon>
        <taxon>Streptococcus</taxon>
    </lineage>
</organism>
<protein>
    <recommendedName>
        <fullName evidence="1">Leucine--tRNA ligase</fullName>
        <ecNumber evidence="1">6.1.1.4</ecNumber>
    </recommendedName>
    <alternativeName>
        <fullName evidence="1">Leucyl-tRNA synthetase</fullName>
        <shortName evidence="1">LeuRS</shortName>
    </alternativeName>
</protein>
<sequence>MTFYDHTAIEPKWQAFWADNHTFKTGTDASKPKFYALDMFPYPSGAGLHVGHPEGYTATDILSRFKRAQGHNVLHPMGWDAFGLPAEQYAMDTGNDPAEFTAENIANFKRQINALGFSYDWDREVNTTDPNYYKWTQWIFTKLYEKGLAYEAEVPVNWVEELGTAIANEEVLPDGTSERGGYPVVRKPMRQWMLKITAYAERLLEDLEEVDWPESIKDMQRNWIGKSTGANVTFKVKDTDKDFTVFTTRPDTLFGATYAVLAPEHALVDAITTADQAEAVADYKRQASLKSDLARTDLAKEKTGVWTGSYAINPVNGNEMPVWIADYVLASYGTGAIMAVPAHDERDWEFAKQFKLDIIPVLEGGNVEEAAFTEDGLHINSDFLDGLDKASAIAKMVEWLEAEGVGNEKVTYRLRDWLFSRQRYWGEPIPIIHWEDGTSTAVPESELPLVLPVTKDIRPSGTGESPLANVTDWLEVTREDGVKGRRETNTMPQWAGSSWYYLRYIDPHNTEKLADEELLKQWLPVDIYVGGAEHAVLHLLYARFWHKVLYDLGVVPTKEPFQKLFNQGMILGTSYRDSRGALVATDKVEKRDGSFFHVETGEELEQAPAKMSKSLKNVVNPDDVVEQYGADTLRVYEMFMGPLDASIAWSEEGLEGSRKFLDRVYRLITTKEITEENSGALDKVYNETVKAVTEQVDQMKFNTAIAQLMVFVNAANKEDKLFSDYAKGFVQLIAPFAPHLGEELWQVLTASGESISYVPWPSYDKSKLVENDVEIVVQIKGKVKAKLVVAKDLSREELQEVALANEKVQAEIAGKDIIKVIAVPNKLVNIVIK</sequence>
<gene>
    <name evidence="1" type="primary">leuS</name>
    <name type="ordered locus">M28_Spy0145</name>
</gene>
<dbReference type="EC" id="6.1.1.4" evidence="1"/>
<dbReference type="EMBL" id="CP000056">
    <property type="protein sequence ID" value="AAX71259.1"/>
    <property type="molecule type" value="Genomic_DNA"/>
</dbReference>
<dbReference type="RefSeq" id="WP_011284463.1">
    <property type="nucleotide sequence ID" value="NC_007296.2"/>
</dbReference>
<dbReference type="SMR" id="Q48VJ7"/>
<dbReference type="KEGG" id="spb:M28_Spy0145"/>
<dbReference type="HOGENOM" id="CLU_004427_0_0_9"/>
<dbReference type="GO" id="GO:0005829">
    <property type="term" value="C:cytosol"/>
    <property type="evidence" value="ECO:0007669"/>
    <property type="project" value="TreeGrafter"/>
</dbReference>
<dbReference type="GO" id="GO:0002161">
    <property type="term" value="F:aminoacyl-tRNA deacylase activity"/>
    <property type="evidence" value="ECO:0007669"/>
    <property type="project" value="InterPro"/>
</dbReference>
<dbReference type="GO" id="GO:0005524">
    <property type="term" value="F:ATP binding"/>
    <property type="evidence" value="ECO:0007669"/>
    <property type="project" value="UniProtKB-UniRule"/>
</dbReference>
<dbReference type="GO" id="GO:0004823">
    <property type="term" value="F:leucine-tRNA ligase activity"/>
    <property type="evidence" value="ECO:0007669"/>
    <property type="project" value="UniProtKB-UniRule"/>
</dbReference>
<dbReference type="GO" id="GO:0006429">
    <property type="term" value="P:leucyl-tRNA aminoacylation"/>
    <property type="evidence" value="ECO:0007669"/>
    <property type="project" value="UniProtKB-UniRule"/>
</dbReference>
<dbReference type="CDD" id="cd07958">
    <property type="entry name" value="Anticodon_Ia_Leu_BEm"/>
    <property type="match status" value="1"/>
</dbReference>
<dbReference type="CDD" id="cd00812">
    <property type="entry name" value="LeuRS_core"/>
    <property type="match status" value="1"/>
</dbReference>
<dbReference type="FunFam" id="1.10.730.10:FF:000012">
    <property type="entry name" value="Leucine--tRNA ligase"/>
    <property type="match status" value="1"/>
</dbReference>
<dbReference type="FunFam" id="3.40.50.620:FF:000056">
    <property type="entry name" value="Leucine--tRNA ligase"/>
    <property type="match status" value="1"/>
</dbReference>
<dbReference type="FunFam" id="3.40.50.620:FF:000077">
    <property type="entry name" value="Leucine--tRNA ligase"/>
    <property type="match status" value="1"/>
</dbReference>
<dbReference type="FunFam" id="1.10.730.10:FF:000011">
    <property type="entry name" value="Leucine--tRNA ligase chloroplastic/mitochondrial"/>
    <property type="match status" value="1"/>
</dbReference>
<dbReference type="Gene3D" id="3.40.50.620">
    <property type="entry name" value="HUPs"/>
    <property type="match status" value="2"/>
</dbReference>
<dbReference type="Gene3D" id="1.10.730.10">
    <property type="entry name" value="Isoleucyl-tRNA Synthetase, Domain 1"/>
    <property type="match status" value="1"/>
</dbReference>
<dbReference type="Gene3D" id="3.90.740.10">
    <property type="entry name" value="Valyl/Leucyl/Isoleucyl-tRNA synthetase, editing domain"/>
    <property type="match status" value="1"/>
</dbReference>
<dbReference type="HAMAP" id="MF_00049_B">
    <property type="entry name" value="Leu_tRNA_synth_B"/>
    <property type="match status" value="1"/>
</dbReference>
<dbReference type="InterPro" id="IPR001412">
    <property type="entry name" value="aa-tRNA-synth_I_CS"/>
</dbReference>
<dbReference type="InterPro" id="IPR002300">
    <property type="entry name" value="aa-tRNA-synth_Ia"/>
</dbReference>
<dbReference type="InterPro" id="IPR002302">
    <property type="entry name" value="Leu-tRNA-ligase"/>
</dbReference>
<dbReference type="InterPro" id="IPR025709">
    <property type="entry name" value="Leu_tRNA-synth_edit"/>
</dbReference>
<dbReference type="InterPro" id="IPR013155">
    <property type="entry name" value="M/V/L/I-tRNA-synth_anticd-bd"/>
</dbReference>
<dbReference type="InterPro" id="IPR015413">
    <property type="entry name" value="Methionyl/Leucyl_tRNA_Synth"/>
</dbReference>
<dbReference type="InterPro" id="IPR014729">
    <property type="entry name" value="Rossmann-like_a/b/a_fold"/>
</dbReference>
<dbReference type="InterPro" id="IPR009080">
    <property type="entry name" value="tRNAsynth_Ia_anticodon-bd"/>
</dbReference>
<dbReference type="InterPro" id="IPR009008">
    <property type="entry name" value="Val/Leu/Ile-tRNA-synth_edit"/>
</dbReference>
<dbReference type="NCBIfam" id="TIGR00396">
    <property type="entry name" value="leuS_bact"/>
    <property type="match status" value="1"/>
</dbReference>
<dbReference type="PANTHER" id="PTHR43740:SF2">
    <property type="entry name" value="LEUCINE--TRNA LIGASE, MITOCHONDRIAL"/>
    <property type="match status" value="1"/>
</dbReference>
<dbReference type="PANTHER" id="PTHR43740">
    <property type="entry name" value="LEUCYL-TRNA SYNTHETASE"/>
    <property type="match status" value="1"/>
</dbReference>
<dbReference type="Pfam" id="PF08264">
    <property type="entry name" value="Anticodon_1"/>
    <property type="match status" value="1"/>
</dbReference>
<dbReference type="Pfam" id="PF00133">
    <property type="entry name" value="tRNA-synt_1"/>
    <property type="match status" value="2"/>
</dbReference>
<dbReference type="Pfam" id="PF13603">
    <property type="entry name" value="tRNA-synt_1_2"/>
    <property type="match status" value="1"/>
</dbReference>
<dbReference type="Pfam" id="PF09334">
    <property type="entry name" value="tRNA-synt_1g"/>
    <property type="match status" value="1"/>
</dbReference>
<dbReference type="PRINTS" id="PR00985">
    <property type="entry name" value="TRNASYNTHLEU"/>
</dbReference>
<dbReference type="SUPFAM" id="SSF47323">
    <property type="entry name" value="Anticodon-binding domain of a subclass of class I aminoacyl-tRNA synthetases"/>
    <property type="match status" value="1"/>
</dbReference>
<dbReference type="SUPFAM" id="SSF52374">
    <property type="entry name" value="Nucleotidylyl transferase"/>
    <property type="match status" value="1"/>
</dbReference>
<dbReference type="SUPFAM" id="SSF50677">
    <property type="entry name" value="ValRS/IleRS/LeuRS editing domain"/>
    <property type="match status" value="1"/>
</dbReference>
<dbReference type="PROSITE" id="PS00178">
    <property type="entry name" value="AA_TRNA_LIGASE_I"/>
    <property type="match status" value="1"/>
</dbReference>
<proteinExistence type="inferred from homology"/>
<feature type="chain" id="PRO_1000009449" description="Leucine--tRNA ligase">
    <location>
        <begin position="1"/>
        <end position="833"/>
    </location>
</feature>
<feature type="short sequence motif" description="'HIGH' region">
    <location>
        <begin position="41"/>
        <end position="52"/>
    </location>
</feature>
<feature type="short sequence motif" description="'KMSKS' region">
    <location>
        <begin position="610"/>
        <end position="614"/>
    </location>
</feature>
<feature type="binding site" evidence="1">
    <location>
        <position position="613"/>
    </location>
    <ligand>
        <name>ATP</name>
        <dbReference type="ChEBI" id="CHEBI:30616"/>
    </ligand>
</feature>
<accession>Q48VJ7</accession>